<proteinExistence type="inferred from homology"/>
<sequence length="515" mass="61033">MDEFHRCGKEDSFWQQCFLYPLFFQEDLYAISHDHYLDVSSSSRPMEHLSSNDQLSFLTVKRLIGQIRQQNHSIVLFVNCDPNPLADRKKSFYSESVLEALTLVLEVPFSIWSKYSVEGMNESKSFRSIHSIFPFLEDKFPHSNSILDARIPYSIHPEILVRTFRRWIRDAPSLHPLRSVLYEYRNSPDNLQRSIIVVPRVNTRFFLFLWNYYVCECESILFSRLKRSSHSRSLSHGSFPQRTHFHRKIKHIIIFSRRNSLKSIWSLKDPKIHYVRYGERPIIAIKGAHLLVKKCRYYLLIFRQFYFHLWSEPYRVCSHQLSKNCSSSPGYFLRVRMNPILVRTKMLDELFIADLITDEIDPIVPIVPIIGLLATEKFCDISGRPISKLSWTSLTDDDILDRFDQIWRNLFHYYSGSFDRDGLYRIKYILSLSCAKTLACKHKSTIRVVRKELGPELFKKSFSKEREFYSLRFSSKAAARSQRERIWHSDIPQINPLANSWQKIQDLKIENLFDQ</sequence>
<gene>
    <name evidence="1" type="primary">matK</name>
</gene>
<accession>Q8HQT0</accession>
<geneLocation type="chloroplast"/>
<keyword id="KW-0150">Chloroplast</keyword>
<keyword id="KW-0507">mRNA processing</keyword>
<keyword id="KW-0934">Plastid</keyword>
<keyword id="KW-0694">RNA-binding</keyword>
<keyword id="KW-0819">tRNA processing</keyword>
<feature type="chain" id="PRO_0000143627" description="Maturase K">
    <location>
        <begin position="1"/>
        <end position="515"/>
    </location>
</feature>
<name>MATK_PINRA</name>
<organism>
    <name type="scientific">Pinus radiata</name>
    <name type="common">Monterey pine</name>
    <name type="synonym">Pinus insignis</name>
    <dbReference type="NCBI Taxonomy" id="3347"/>
    <lineage>
        <taxon>Eukaryota</taxon>
        <taxon>Viridiplantae</taxon>
        <taxon>Streptophyta</taxon>
        <taxon>Embryophyta</taxon>
        <taxon>Tracheophyta</taxon>
        <taxon>Spermatophyta</taxon>
        <taxon>Pinopsida</taxon>
        <taxon>Pinidae</taxon>
        <taxon>Conifers I</taxon>
        <taxon>Pinales</taxon>
        <taxon>Pinaceae</taxon>
        <taxon>Pinus</taxon>
        <taxon>Pinus subgen. Pinus</taxon>
    </lineage>
</organism>
<comment type="function">
    <text evidence="1">Usually encoded in the trnK tRNA gene intron. Probably assists in splicing its own and other chloroplast group II introns.</text>
</comment>
<comment type="subcellular location">
    <subcellularLocation>
        <location>Plastid</location>
        <location>Chloroplast</location>
    </subcellularLocation>
</comment>
<comment type="similarity">
    <text evidence="1">Belongs to the intron maturase 2 family. MatK subfamily.</text>
</comment>
<dbReference type="EMBL" id="AB080934">
    <property type="protein sequence ID" value="BAC11937.1"/>
    <property type="molecule type" value="Genomic_DNA"/>
</dbReference>
<dbReference type="GO" id="GO:0009507">
    <property type="term" value="C:chloroplast"/>
    <property type="evidence" value="ECO:0007669"/>
    <property type="project" value="UniProtKB-SubCell"/>
</dbReference>
<dbReference type="GO" id="GO:0003723">
    <property type="term" value="F:RNA binding"/>
    <property type="evidence" value="ECO:0007669"/>
    <property type="project" value="UniProtKB-KW"/>
</dbReference>
<dbReference type="GO" id="GO:0006397">
    <property type="term" value="P:mRNA processing"/>
    <property type="evidence" value="ECO:0007669"/>
    <property type="project" value="UniProtKB-KW"/>
</dbReference>
<dbReference type="GO" id="GO:0008380">
    <property type="term" value="P:RNA splicing"/>
    <property type="evidence" value="ECO:0007669"/>
    <property type="project" value="UniProtKB-UniRule"/>
</dbReference>
<dbReference type="GO" id="GO:0008033">
    <property type="term" value="P:tRNA processing"/>
    <property type="evidence" value="ECO:0007669"/>
    <property type="project" value="UniProtKB-KW"/>
</dbReference>
<dbReference type="HAMAP" id="MF_01390">
    <property type="entry name" value="MatK"/>
    <property type="match status" value="1"/>
</dbReference>
<dbReference type="InterPro" id="IPR024937">
    <property type="entry name" value="Domain_X"/>
</dbReference>
<dbReference type="InterPro" id="IPR002866">
    <property type="entry name" value="Maturase_MatK"/>
</dbReference>
<dbReference type="InterPro" id="IPR024942">
    <property type="entry name" value="Maturase_MatK_N"/>
</dbReference>
<dbReference type="PANTHER" id="PTHR34811">
    <property type="entry name" value="MATURASE K"/>
    <property type="match status" value="1"/>
</dbReference>
<dbReference type="PANTHER" id="PTHR34811:SF1">
    <property type="entry name" value="MATURASE K"/>
    <property type="match status" value="1"/>
</dbReference>
<dbReference type="Pfam" id="PF01348">
    <property type="entry name" value="Intron_maturas2"/>
    <property type="match status" value="1"/>
</dbReference>
<dbReference type="Pfam" id="PF01824">
    <property type="entry name" value="MatK_N"/>
    <property type="match status" value="1"/>
</dbReference>
<evidence type="ECO:0000255" key="1">
    <source>
        <dbReference type="HAMAP-Rule" id="MF_01390"/>
    </source>
</evidence>
<protein>
    <recommendedName>
        <fullName evidence="1">Maturase K</fullName>
    </recommendedName>
    <alternativeName>
        <fullName evidence="1">Intron maturase</fullName>
    </alternativeName>
</protein>
<reference key="1">
    <citation type="submission" date="2002-03" db="EMBL/GenBank/DDBJ databases">
        <title>Phylogeny of the North American pines.</title>
        <authorList>
            <person name="Geada-Lopez G."/>
            <person name="Kamiya K."/>
            <person name="Harada K."/>
        </authorList>
    </citation>
    <scope>NUCLEOTIDE SEQUENCE [GENOMIC DNA]</scope>
    <source>
        <tissue>Leaf</tissue>
    </source>
</reference>